<comment type="catalytic activity">
    <reaction>
        <text>pyruvate + ATP = phosphoenolpyruvate + ADP + H(+)</text>
        <dbReference type="Rhea" id="RHEA:18157"/>
        <dbReference type="ChEBI" id="CHEBI:15361"/>
        <dbReference type="ChEBI" id="CHEBI:15378"/>
        <dbReference type="ChEBI" id="CHEBI:30616"/>
        <dbReference type="ChEBI" id="CHEBI:58702"/>
        <dbReference type="ChEBI" id="CHEBI:456216"/>
        <dbReference type="EC" id="2.7.1.40"/>
    </reaction>
</comment>
<comment type="cofactor">
    <cofactor evidence="1">
        <name>Mg(2+)</name>
        <dbReference type="ChEBI" id="CHEBI:18420"/>
    </cofactor>
</comment>
<comment type="cofactor">
    <cofactor evidence="1">
        <name>K(+)</name>
        <dbReference type="ChEBI" id="CHEBI:29103"/>
    </cofactor>
</comment>
<comment type="pathway">
    <text>Carbohydrate degradation; glycolysis; pyruvate from D-glyceraldehyde 3-phosphate: step 5/5.</text>
</comment>
<comment type="subunit">
    <text evidence="1">Homotetramer.</text>
</comment>
<comment type="developmental stage">
    <text evidence="4">Expressed in late sporogonial stages.</text>
</comment>
<comment type="similarity">
    <text evidence="5">Belongs to the pyruvate kinase family.</text>
</comment>
<organism>
    <name type="scientific">Encephalitozoon cuniculi (strain GB-M1)</name>
    <name type="common">Microsporidian parasite</name>
    <dbReference type="NCBI Taxonomy" id="284813"/>
    <lineage>
        <taxon>Eukaryota</taxon>
        <taxon>Fungi</taxon>
        <taxon>Fungi incertae sedis</taxon>
        <taxon>Microsporidia</taxon>
        <taxon>Unikaryonidae</taxon>
        <taxon>Encephalitozoon</taxon>
    </lineage>
</organism>
<feature type="chain" id="PRO_0000379473" description="Pyruvate kinase">
    <location>
        <begin position="1"/>
        <end position="428"/>
    </location>
</feature>
<feature type="binding site" evidence="1">
    <location>
        <position position="34"/>
    </location>
    <ligand>
        <name>substrate</name>
    </ligand>
</feature>
<feature type="binding site" evidence="2">
    <location>
        <begin position="36"/>
        <end position="39"/>
    </location>
    <ligand>
        <name>ATP</name>
        <dbReference type="ChEBI" id="CHEBI:30616"/>
    </ligand>
</feature>
<feature type="binding site" evidence="1">
    <location>
        <position position="36"/>
    </location>
    <ligand>
        <name>K(+)</name>
        <dbReference type="ChEBI" id="CHEBI:29103"/>
    </ligand>
</feature>
<feature type="binding site" evidence="1">
    <location>
        <position position="38"/>
    </location>
    <ligand>
        <name>K(+)</name>
        <dbReference type="ChEBI" id="CHEBI:29103"/>
    </ligand>
</feature>
<feature type="binding site" evidence="1">
    <location>
        <position position="68"/>
    </location>
    <ligand>
        <name>K(+)</name>
        <dbReference type="ChEBI" id="CHEBI:29103"/>
    </ligand>
</feature>
<feature type="binding site" evidence="1">
    <location>
        <position position="69"/>
    </location>
    <ligand>
        <name>K(+)</name>
        <dbReference type="ChEBI" id="CHEBI:29103"/>
    </ligand>
</feature>
<feature type="binding site" evidence="2">
    <location>
        <position position="75"/>
    </location>
    <ligand>
        <name>ATP</name>
        <dbReference type="ChEBI" id="CHEBI:30616"/>
    </ligand>
</feature>
<feature type="binding site" evidence="2">
    <location>
        <position position="152"/>
    </location>
    <ligand>
        <name>ATP</name>
        <dbReference type="ChEBI" id="CHEBI:30616"/>
    </ligand>
</feature>
<feature type="binding site" evidence="3">
    <location>
        <position position="214"/>
    </location>
    <ligand>
        <name>Mg(2+)</name>
        <dbReference type="ChEBI" id="CHEBI:18420"/>
    </ligand>
</feature>
<feature type="binding site" evidence="1">
    <location>
        <position position="237"/>
    </location>
    <ligand>
        <name>substrate</name>
    </ligand>
</feature>
<feature type="binding site" evidence="1">
    <location>
        <position position="238"/>
    </location>
    <ligand>
        <name>Mg(2+)</name>
        <dbReference type="ChEBI" id="CHEBI:18420"/>
    </ligand>
</feature>
<feature type="binding site" evidence="1">
    <location>
        <position position="238"/>
    </location>
    <ligand>
        <name>substrate</name>
    </ligand>
</feature>
<feature type="binding site" evidence="1">
    <location>
        <position position="270"/>
    </location>
    <ligand>
        <name>substrate</name>
    </ligand>
</feature>
<feature type="site" description="Transition state stabilizer" evidence="1">
    <location>
        <position position="212"/>
    </location>
</feature>
<reference key="1">
    <citation type="journal article" date="2001" name="Nature">
        <title>Genome sequence and gene compaction of the eukaryote parasite Encephalitozoon cuniculi.</title>
        <authorList>
            <person name="Katinka M.D."/>
            <person name="Duprat S."/>
            <person name="Cornillot E."/>
            <person name="Metenier G."/>
            <person name="Thomarat F."/>
            <person name="Prensier G."/>
            <person name="Barbe V."/>
            <person name="Peyretaillade E."/>
            <person name="Brottier P."/>
            <person name="Wincker P."/>
            <person name="Delbac F."/>
            <person name="El Alaoui H."/>
            <person name="Peyret P."/>
            <person name="Saurin W."/>
            <person name="Gouy M."/>
            <person name="Weissenbach J."/>
            <person name="Vivares C.P."/>
        </authorList>
    </citation>
    <scope>NUCLEOTIDE SEQUENCE [LARGE SCALE GENOMIC DNA]</scope>
    <source>
        <strain>GB-M1</strain>
    </source>
</reference>
<reference key="2">
    <citation type="journal article" date="2009" name="BMC Genomics">
        <title>Identification of transcriptional signals in Encephalitozoon cuniculi widespread among Microsporidia phylum: support for accurate structural genome annotation.</title>
        <authorList>
            <person name="Peyretaillade E."/>
            <person name="Goncalves O."/>
            <person name="Terrat S."/>
            <person name="Dugat-Bony E."/>
            <person name="Wincker P."/>
            <person name="Cornman R.S."/>
            <person name="Evans J.D."/>
            <person name="Delbac F."/>
            <person name="Peyret P."/>
        </authorList>
    </citation>
    <scope>GENOME REANNOTATION</scope>
    <source>
        <strain>GB-M1</strain>
    </source>
</reference>
<reference key="3">
    <citation type="journal article" date="2006" name="Proteomics">
        <title>Proteomic analysis of the eukaryotic parasite Encephalitozoon cuniculi (microsporidia): a reference map for proteins expressed in late sporogonial stages.</title>
        <authorList>
            <person name="Brosson D."/>
            <person name="Kuhn L."/>
            <person name="Delbac F."/>
            <person name="Garin J."/>
            <person name="Vivares C.P."/>
            <person name="Texier C."/>
        </authorList>
    </citation>
    <scope>IDENTIFICATION BY MASS SPECTROMETRY [LARGE SCALE ANALYSIS]</scope>
    <scope>DEVELOPMENTAL STAGE</scope>
</reference>
<dbReference type="EC" id="2.7.1.40"/>
<dbReference type="EMBL" id="AL590451">
    <property type="protein sequence ID" value="CAD27037.2"/>
    <property type="molecule type" value="Genomic_DNA"/>
</dbReference>
<dbReference type="RefSeq" id="XP_955618.1">
    <property type="nucleotide sequence ID" value="XM_950525.1"/>
</dbReference>
<dbReference type="SMR" id="Q8SQP0"/>
<dbReference type="FunCoup" id="Q8SQP0">
    <property type="interactions" value="62"/>
</dbReference>
<dbReference type="STRING" id="284813.Q8SQP0"/>
<dbReference type="VEuPathDB" id="MicrosporidiaDB:ECU09_0640"/>
<dbReference type="HOGENOM" id="CLU_015439_1_1_1"/>
<dbReference type="InParanoid" id="Q8SQP0"/>
<dbReference type="OrthoDB" id="108365at2759"/>
<dbReference type="UniPathway" id="UPA00109">
    <property type="reaction ID" value="UER00188"/>
</dbReference>
<dbReference type="Proteomes" id="UP000000819">
    <property type="component" value="Chromosome IX"/>
</dbReference>
<dbReference type="GO" id="GO:0005524">
    <property type="term" value="F:ATP binding"/>
    <property type="evidence" value="ECO:0007669"/>
    <property type="project" value="UniProtKB-KW"/>
</dbReference>
<dbReference type="GO" id="GO:0016301">
    <property type="term" value="F:kinase activity"/>
    <property type="evidence" value="ECO:0007669"/>
    <property type="project" value="UniProtKB-KW"/>
</dbReference>
<dbReference type="GO" id="GO:0000287">
    <property type="term" value="F:magnesium ion binding"/>
    <property type="evidence" value="ECO:0007669"/>
    <property type="project" value="InterPro"/>
</dbReference>
<dbReference type="GO" id="GO:0030955">
    <property type="term" value="F:potassium ion binding"/>
    <property type="evidence" value="ECO:0007669"/>
    <property type="project" value="InterPro"/>
</dbReference>
<dbReference type="GO" id="GO:0004743">
    <property type="term" value="F:pyruvate kinase activity"/>
    <property type="evidence" value="ECO:0007669"/>
    <property type="project" value="UniProtKB-EC"/>
</dbReference>
<dbReference type="Gene3D" id="3.20.20.60">
    <property type="entry name" value="Phosphoenolpyruvate-binding domains"/>
    <property type="match status" value="1"/>
</dbReference>
<dbReference type="Gene3D" id="2.40.33.10">
    <property type="entry name" value="PK beta-barrel domain-like"/>
    <property type="match status" value="1"/>
</dbReference>
<dbReference type="Gene3D" id="3.40.1380.20">
    <property type="entry name" value="Pyruvate kinase, C-terminal domain"/>
    <property type="match status" value="1"/>
</dbReference>
<dbReference type="InterPro" id="IPR001697">
    <property type="entry name" value="Pyr_Knase"/>
</dbReference>
<dbReference type="InterPro" id="IPR015813">
    <property type="entry name" value="Pyrv/PenolPyrv_kinase-like_dom"/>
</dbReference>
<dbReference type="InterPro" id="IPR040442">
    <property type="entry name" value="Pyrv_kinase-like_dom_sf"/>
</dbReference>
<dbReference type="InterPro" id="IPR011037">
    <property type="entry name" value="Pyrv_Knase-like_insert_dom_sf"/>
</dbReference>
<dbReference type="InterPro" id="IPR015793">
    <property type="entry name" value="Pyrv_Knase_brl"/>
</dbReference>
<dbReference type="InterPro" id="IPR036918">
    <property type="entry name" value="Pyrv_Knase_C_sf"/>
</dbReference>
<dbReference type="InterPro" id="IPR015806">
    <property type="entry name" value="Pyrv_Knase_insert_dom_sf"/>
</dbReference>
<dbReference type="NCBIfam" id="TIGR01064">
    <property type="entry name" value="pyruv_kin"/>
    <property type="match status" value="1"/>
</dbReference>
<dbReference type="PANTHER" id="PTHR11817">
    <property type="entry name" value="PYRUVATE KINASE"/>
    <property type="match status" value="1"/>
</dbReference>
<dbReference type="Pfam" id="PF00224">
    <property type="entry name" value="PK"/>
    <property type="match status" value="1"/>
</dbReference>
<dbReference type="PRINTS" id="PR01050">
    <property type="entry name" value="PYRUVTKNASE"/>
</dbReference>
<dbReference type="SUPFAM" id="SSF51621">
    <property type="entry name" value="Phosphoenolpyruvate/pyruvate domain"/>
    <property type="match status" value="1"/>
</dbReference>
<dbReference type="SUPFAM" id="SSF50800">
    <property type="entry name" value="PK beta-barrel domain-like"/>
    <property type="match status" value="1"/>
</dbReference>
<dbReference type="SUPFAM" id="SSF52935">
    <property type="entry name" value="PK C-terminal domain-like"/>
    <property type="match status" value="1"/>
</dbReference>
<proteinExistence type="evidence at protein level"/>
<sequence>MRMVLTKIVCTIGPRTSSREKIKELIDAGMSIARLNFSHGSREAHLEVIRNIRDSRSGAGRHVSIALDTRGPEVRLRTPEMKDIKVEGGEVLRFSLLSSEKDIWIPGVDLKSLGVDNRVFIDDGAIELRVVNVEEDGFECEVLNSGMIKSNKSMNFPGTDIGDRALGDEDKNDIAFGLENGIDMVFASFVSCRADVEEIRRLVGSKVPVVSKIESCLGMRNLKEIALCSDGVMIARGDLGVEIGLENMFSAQKRILYEVKREGRPVICATQMMESMTLKNAPNRSEISDVGNAVLDGCDCVMLSAESAVGMFPVETVKFMRSICADAERYDMESRKGAGACGVSSYVDGVVICSGTESQIEKIYLSKPETPIIVISESLWILRRFSIYRGIIPVYGKGSEDAEATLRRLGLRGRFLAVGREDVRMVSV</sequence>
<name>KPYK_ENCCU</name>
<keyword id="KW-0067">ATP-binding</keyword>
<keyword id="KW-0324">Glycolysis</keyword>
<keyword id="KW-0418">Kinase</keyword>
<keyword id="KW-0460">Magnesium</keyword>
<keyword id="KW-0479">Metal-binding</keyword>
<keyword id="KW-0547">Nucleotide-binding</keyword>
<keyword id="KW-0630">Potassium</keyword>
<keyword id="KW-0670">Pyruvate</keyword>
<keyword id="KW-1185">Reference proteome</keyword>
<keyword id="KW-0808">Transferase</keyword>
<protein>
    <recommendedName>
        <fullName>Pyruvate kinase</fullName>
        <shortName>PK</shortName>
        <ecNumber>2.7.1.40</ecNumber>
    </recommendedName>
</protein>
<accession>Q8SQP0</accession>
<evidence type="ECO:0000250" key="1"/>
<evidence type="ECO:0000250" key="2">
    <source>
        <dbReference type="UniProtKB" id="P14618"/>
    </source>
</evidence>
<evidence type="ECO:0000255" key="3"/>
<evidence type="ECO:0000269" key="4">
    <source>
    </source>
</evidence>
<evidence type="ECO:0000305" key="5"/>
<gene>
    <name type="primary">PYK1</name>
    <name type="ordered locus">ECU09_0640</name>
</gene>